<name>PYRE_HAEIG</name>
<keyword id="KW-0328">Glycosyltransferase</keyword>
<keyword id="KW-0460">Magnesium</keyword>
<keyword id="KW-0665">Pyrimidine biosynthesis</keyword>
<keyword id="KW-0808">Transferase</keyword>
<evidence type="ECO:0000255" key="1">
    <source>
        <dbReference type="HAMAP-Rule" id="MF_01208"/>
    </source>
</evidence>
<dbReference type="EC" id="2.4.2.10" evidence="1"/>
<dbReference type="EMBL" id="CP000672">
    <property type="protein sequence ID" value="ABQ99795.1"/>
    <property type="molecule type" value="Genomic_DNA"/>
</dbReference>
<dbReference type="SMR" id="A5UG90"/>
<dbReference type="KEGG" id="hiq:CGSHiGG_04160"/>
<dbReference type="HOGENOM" id="CLU_074878_0_1_6"/>
<dbReference type="UniPathway" id="UPA00070">
    <property type="reaction ID" value="UER00119"/>
</dbReference>
<dbReference type="Proteomes" id="UP000001990">
    <property type="component" value="Chromosome"/>
</dbReference>
<dbReference type="GO" id="GO:0005737">
    <property type="term" value="C:cytoplasm"/>
    <property type="evidence" value="ECO:0007669"/>
    <property type="project" value="TreeGrafter"/>
</dbReference>
<dbReference type="GO" id="GO:0000287">
    <property type="term" value="F:magnesium ion binding"/>
    <property type="evidence" value="ECO:0007669"/>
    <property type="project" value="UniProtKB-UniRule"/>
</dbReference>
<dbReference type="GO" id="GO:0004588">
    <property type="term" value="F:orotate phosphoribosyltransferase activity"/>
    <property type="evidence" value="ECO:0007669"/>
    <property type="project" value="UniProtKB-UniRule"/>
</dbReference>
<dbReference type="GO" id="GO:0006207">
    <property type="term" value="P:'de novo' pyrimidine nucleobase biosynthetic process"/>
    <property type="evidence" value="ECO:0007669"/>
    <property type="project" value="TreeGrafter"/>
</dbReference>
<dbReference type="GO" id="GO:0044205">
    <property type="term" value="P:'de novo' UMP biosynthetic process"/>
    <property type="evidence" value="ECO:0007669"/>
    <property type="project" value="UniProtKB-UniRule"/>
</dbReference>
<dbReference type="GO" id="GO:0046132">
    <property type="term" value="P:pyrimidine ribonucleoside biosynthetic process"/>
    <property type="evidence" value="ECO:0007669"/>
    <property type="project" value="TreeGrafter"/>
</dbReference>
<dbReference type="CDD" id="cd06223">
    <property type="entry name" value="PRTases_typeI"/>
    <property type="match status" value="1"/>
</dbReference>
<dbReference type="FunFam" id="3.40.50.2020:FF:000008">
    <property type="entry name" value="Orotate phosphoribosyltransferase"/>
    <property type="match status" value="1"/>
</dbReference>
<dbReference type="Gene3D" id="3.40.50.2020">
    <property type="match status" value="1"/>
</dbReference>
<dbReference type="HAMAP" id="MF_01208">
    <property type="entry name" value="PyrE"/>
    <property type="match status" value="1"/>
</dbReference>
<dbReference type="InterPro" id="IPR023031">
    <property type="entry name" value="OPRT"/>
</dbReference>
<dbReference type="InterPro" id="IPR004467">
    <property type="entry name" value="Or_phspho_trans_dom"/>
</dbReference>
<dbReference type="InterPro" id="IPR000836">
    <property type="entry name" value="PRibTrfase_dom"/>
</dbReference>
<dbReference type="InterPro" id="IPR029057">
    <property type="entry name" value="PRTase-like"/>
</dbReference>
<dbReference type="NCBIfam" id="TIGR00336">
    <property type="entry name" value="pyrE"/>
    <property type="match status" value="1"/>
</dbReference>
<dbReference type="PANTHER" id="PTHR46683">
    <property type="entry name" value="OROTATE PHOSPHORIBOSYLTRANSFERASE 1-RELATED"/>
    <property type="match status" value="1"/>
</dbReference>
<dbReference type="PANTHER" id="PTHR46683:SF1">
    <property type="entry name" value="OROTATE PHOSPHORIBOSYLTRANSFERASE 1-RELATED"/>
    <property type="match status" value="1"/>
</dbReference>
<dbReference type="Pfam" id="PF00156">
    <property type="entry name" value="Pribosyltran"/>
    <property type="match status" value="1"/>
</dbReference>
<dbReference type="SUPFAM" id="SSF53271">
    <property type="entry name" value="PRTase-like"/>
    <property type="match status" value="1"/>
</dbReference>
<dbReference type="PROSITE" id="PS00103">
    <property type="entry name" value="PUR_PYR_PR_TRANSFER"/>
    <property type="match status" value="1"/>
</dbReference>
<protein>
    <recommendedName>
        <fullName evidence="1">Orotate phosphoribosyltransferase</fullName>
        <shortName evidence="1">OPRT</shortName>
        <shortName evidence="1">OPRTase</shortName>
        <ecNumber evidence="1">2.4.2.10</ecNumber>
    </recommendedName>
</protein>
<proteinExistence type="inferred from homology"/>
<accession>A5UG90</accession>
<sequence length="213" mass="23643">MEQYKRDFIEFALSRNVLKFGEFTLKSGRKSPYFFNAGLFNTGADLARLGEFYAAAIQASAVDFDVVFGPAYKGIPIGTSVSVALFNRYGIDKPVCFNRKEVKDHGEGGNLIGSPLQGKILLVDDVITAGTAIRESMELISANKAELAAVLIALNRKERGKGELSAIQEVERDYQCQVLSIIDLDDLMQFIEQDPRYSSHLPEMRAYRAEFGV</sequence>
<organism>
    <name type="scientific">Haemophilus influenzae (strain PittGG)</name>
    <dbReference type="NCBI Taxonomy" id="374931"/>
    <lineage>
        <taxon>Bacteria</taxon>
        <taxon>Pseudomonadati</taxon>
        <taxon>Pseudomonadota</taxon>
        <taxon>Gammaproteobacteria</taxon>
        <taxon>Pasteurellales</taxon>
        <taxon>Pasteurellaceae</taxon>
        <taxon>Haemophilus</taxon>
    </lineage>
</organism>
<gene>
    <name evidence="1" type="primary">pyrE</name>
    <name type="ordered locus">CGSHiGG_04160</name>
</gene>
<feature type="chain" id="PRO_1000066235" description="Orotate phosphoribosyltransferase">
    <location>
        <begin position="1"/>
        <end position="213"/>
    </location>
</feature>
<feature type="binding site" description="in other chain" evidence="1">
    <location>
        <position position="26"/>
    </location>
    <ligand>
        <name>5-phospho-alpha-D-ribose 1-diphosphate</name>
        <dbReference type="ChEBI" id="CHEBI:58017"/>
        <note>ligand shared between dimeric partners</note>
    </ligand>
</feature>
<feature type="binding site" evidence="1">
    <location>
        <begin position="34"/>
        <end position="35"/>
    </location>
    <ligand>
        <name>orotate</name>
        <dbReference type="ChEBI" id="CHEBI:30839"/>
    </ligand>
</feature>
<feature type="binding site" description="in other chain" evidence="1">
    <location>
        <begin position="72"/>
        <end position="73"/>
    </location>
    <ligand>
        <name>5-phospho-alpha-D-ribose 1-diphosphate</name>
        <dbReference type="ChEBI" id="CHEBI:58017"/>
        <note>ligand shared between dimeric partners</note>
    </ligand>
</feature>
<feature type="binding site" evidence="1">
    <location>
        <position position="99"/>
    </location>
    <ligand>
        <name>5-phospho-alpha-D-ribose 1-diphosphate</name>
        <dbReference type="ChEBI" id="CHEBI:58017"/>
        <note>ligand shared between dimeric partners</note>
    </ligand>
</feature>
<feature type="binding site" description="in other chain" evidence="1">
    <location>
        <position position="100"/>
    </location>
    <ligand>
        <name>5-phospho-alpha-D-ribose 1-diphosphate</name>
        <dbReference type="ChEBI" id="CHEBI:58017"/>
        <note>ligand shared between dimeric partners</note>
    </ligand>
</feature>
<feature type="binding site" evidence="1">
    <location>
        <position position="103"/>
    </location>
    <ligand>
        <name>5-phospho-alpha-D-ribose 1-diphosphate</name>
        <dbReference type="ChEBI" id="CHEBI:58017"/>
        <note>ligand shared between dimeric partners</note>
    </ligand>
</feature>
<feature type="binding site" evidence="1">
    <location>
        <position position="105"/>
    </location>
    <ligand>
        <name>5-phospho-alpha-D-ribose 1-diphosphate</name>
        <dbReference type="ChEBI" id="CHEBI:58017"/>
        <note>ligand shared between dimeric partners</note>
    </ligand>
</feature>
<feature type="binding site" description="in other chain" evidence="1">
    <location>
        <begin position="124"/>
        <end position="132"/>
    </location>
    <ligand>
        <name>5-phospho-alpha-D-ribose 1-diphosphate</name>
        <dbReference type="ChEBI" id="CHEBI:58017"/>
        <note>ligand shared between dimeric partners</note>
    </ligand>
</feature>
<feature type="binding site" evidence="1">
    <location>
        <position position="128"/>
    </location>
    <ligand>
        <name>orotate</name>
        <dbReference type="ChEBI" id="CHEBI:30839"/>
    </ligand>
</feature>
<feature type="binding site" evidence="1">
    <location>
        <position position="156"/>
    </location>
    <ligand>
        <name>orotate</name>
        <dbReference type="ChEBI" id="CHEBI:30839"/>
    </ligand>
</feature>
<comment type="function">
    <text evidence="1">Catalyzes the transfer of a ribosyl phosphate group from 5-phosphoribose 1-diphosphate to orotate, leading to the formation of orotidine monophosphate (OMP).</text>
</comment>
<comment type="catalytic activity">
    <reaction evidence="1">
        <text>orotidine 5'-phosphate + diphosphate = orotate + 5-phospho-alpha-D-ribose 1-diphosphate</text>
        <dbReference type="Rhea" id="RHEA:10380"/>
        <dbReference type="ChEBI" id="CHEBI:30839"/>
        <dbReference type="ChEBI" id="CHEBI:33019"/>
        <dbReference type="ChEBI" id="CHEBI:57538"/>
        <dbReference type="ChEBI" id="CHEBI:58017"/>
        <dbReference type="EC" id="2.4.2.10"/>
    </reaction>
</comment>
<comment type="cofactor">
    <cofactor evidence="1">
        <name>Mg(2+)</name>
        <dbReference type="ChEBI" id="CHEBI:18420"/>
    </cofactor>
</comment>
<comment type="pathway">
    <text evidence="1">Pyrimidine metabolism; UMP biosynthesis via de novo pathway; UMP from orotate: step 1/2.</text>
</comment>
<comment type="subunit">
    <text evidence="1">Homodimer.</text>
</comment>
<comment type="similarity">
    <text evidence="1">Belongs to the purine/pyrimidine phosphoribosyltransferase family. PyrE subfamily.</text>
</comment>
<reference key="1">
    <citation type="journal article" date="2007" name="Genome Biol.">
        <title>Characterization and modeling of the Haemophilus influenzae core and supragenomes based on the complete genomic sequences of Rd and 12 clinical nontypeable strains.</title>
        <authorList>
            <person name="Hogg J.S."/>
            <person name="Hu F.Z."/>
            <person name="Janto B."/>
            <person name="Boissy R."/>
            <person name="Hayes J."/>
            <person name="Keefe R."/>
            <person name="Post J.C."/>
            <person name="Ehrlich G.D."/>
        </authorList>
    </citation>
    <scope>NUCLEOTIDE SEQUENCE [LARGE SCALE GENOMIC DNA]</scope>
    <source>
        <strain>PittGG</strain>
    </source>
</reference>